<proteinExistence type="inferred from homology"/>
<dbReference type="EC" id="1.21.98.4" evidence="1"/>
<dbReference type="EMBL" id="FM209186">
    <property type="protein sequence ID" value="CAW28061.1"/>
    <property type="molecule type" value="Genomic_DNA"/>
</dbReference>
<dbReference type="RefSeq" id="WP_003119136.1">
    <property type="nucleotide sequence ID" value="NC_011770.1"/>
</dbReference>
<dbReference type="SMR" id="B7VAB6"/>
<dbReference type="KEGG" id="pag:PLES_33341"/>
<dbReference type="HOGENOM" id="CLU_009273_4_7_6"/>
<dbReference type="UniPathway" id="UPA00539"/>
<dbReference type="GO" id="GO:0051539">
    <property type="term" value="F:4 iron, 4 sulfur cluster binding"/>
    <property type="evidence" value="ECO:0007669"/>
    <property type="project" value="UniProtKB-KW"/>
</dbReference>
<dbReference type="GO" id="GO:0009975">
    <property type="term" value="F:cyclase activity"/>
    <property type="evidence" value="ECO:0007669"/>
    <property type="project" value="UniProtKB-UniRule"/>
</dbReference>
<dbReference type="GO" id="GO:0005506">
    <property type="term" value="F:iron ion binding"/>
    <property type="evidence" value="ECO:0007669"/>
    <property type="project" value="UniProtKB-UniRule"/>
</dbReference>
<dbReference type="GO" id="GO:0016491">
    <property type="term" value="F:oxidoreductase activity"/>
    <property type="evidence" value="ECO:0007669"/>
    <property type="project" value="UniProtKB-KW"/>
</dbReference>
<dbReference type="GO" id="GO:1904047">
    <property type="term" value="F:S-adenosyl-L-methionine binding"/>
    <property type="evidence" value="ECO:0007669"/>
    <property type="project" value="UniProtKB-UniRule"/>
</dbReference>
<dbReference type="GO" id="GO:0018189">
    <property type="term" value="P:pyrroloquinoline quinone biosynthetic process"/>
    <property type="evidence" value="ECO:0007669"/>
    <property type="project" value="UniProtKB-UniRule"/>
</dbReference>
<dbReference type="CDD" id="cd01335">
    <property type="entry name" value="Radical_SAM"/>
    <property type="match status" value="1"/>
</dbReference>
<dbReference type="CDD" id="cd21119">
    <property type="entry name" value="SPASM_PqqE"/>
    <property type="match status" value="1"/>
</dbReference>
<dbReference type="Gene3D" id="3.20.20.70">
    <property type="entry name" value="Aldolase class I"/>
    <property type="match status" value="1"/>
</dbReference>
<dbReference type="HAMAP" id="MF_00660">
    <property type="entry name" value="PqqE"/>
    <property type="match status" value="1"/>
</dbReference>
<dbReference type="InterPro" id="IPR023885">
    <property type="entry name" value="4Fe4S-binding_SPASM_dom"/>
</dbReference>
<dbReference type="InterPro" id="IPR013785">
    <property type="entry name" value="Aldolase_TIM"/>
</dbReference>
<dbReference type="InterPro" id="IPR006638">
    <property type="entry name" value="Elp3/MiaA/NifB-like_rSAM"/>
</dbReference>
<dbReference type="InterPro" id="IPR000385">
    <property type="entry name" value="MoaA_NifB_PqqE_Fe-S-bd_CS"/>
</dbReference>
<dbReference type="InterPro" id="IPR011843">
    <property type="entry name" value="PQQ_synth_PqqE_bac"/>
</dbReference>
<dbReference type="InterPro" id="IPR017200">
    <property type="entry name" value="PqqE-like"/>
</dbReference>
<dbReference type="InterPro" id="IPR050377">
    <property type="entry name" value="Radical_SAM_PqqE_MftC-like"/>
</dbReference>
<dbReference type="InterPro" id="IPR007197">
    <property type="entry name" value="rSAM"/>
</dbReference>
<dbReference type="NCBIfam" id="TIGR02109">
    <property type="entry name" value="PQQ_syn_pqqE"/>
    <property type="match status" value="1"/>
</dbReference>
<dbReference type="NCBIfam" id="TIGR04085">
    <property type="entry name" value="rSAM_more_4Fe4S"/>
    <property type="match status" value="1"/>
</dbReference>
<dbReference type="PANTHER" id="PTHR11228:SF7">
    <property type="entry name" value="PQQA PEPTIDE CYCLASE"/>
    <property type="match status" value="1"/>
</dbReference>
<dbReference type="PANTHER" id="PTHR11228">
    <property type="entry name" value="RADICAL SAM DOMAIN PROTEIN"/>
    <property type="match status" value="1"/>
</dbReference>
<dbReference type="Pfam" id="PF13353">
    <property type="entry name" value="Fer4_12"/>
    <property type="match status" value="1"/>
</dbReference>
<dbReference type="Pfam" id="PF04055">
    <property type="entry name" value="Radical_SAM"/>
    <property type="match status" value="1"/>
</dbReference>
<dbReference type="Pfam" id="PF13186">
    <property type="entry name" value="SPASM"/>
    <property type="match status" value="1"/>
</dbReference>
<dbReference type="PIRSF" id="PIRSF037420">
    <property type="entry name" value="PQQ_syn_pqqE"/>
    <property type="match status" value="1"/>
</dbReference>
<dbReference type="SFLD" id="SFLDF00280">
    <property type="entry name" value="coenzyme_PQQ_synthesis_protein"/>
    <property type="match status" value="1"/>
</dbReference>
<dbReference type="SFLD" id="SFLDG01386">
    <property type="entry name" value="main_SPASM_domain-containing"/>
    <property type="match status" value="1"/>
</dbReference>
<dbReference type="SMART" id="SM00729">
    <property type="entry name" value="Elp3"/>
    <property type="match status" value="1"/>
</dbReference>
<dbReference type="SUPFAM" id="SSF102114">
    <property type="entry name" value="Radical SAM enzymes"/>
    <property type="match status" value="1"/>
</dbReference>
<dbReference type="PROSITE" id="PS01305">
    <property type="entry name" value="MOAA_NIFB_PQQE"/>
    <property type="match status" value="1"/>
</dbReference>
<dbReference type="PROSITE" id="PS51918">
    <property type="entry name" value="RADICAL_SAM"/>
    <property type="match status" value="1"/>
</dbReference>
<sequence length="381" mass="42549">MRNSGSSCSESVGPPLWLLAELTYRCPLQCPYCSNPLEFAREGAELSTAEWIEVFRQARELGAAQLGFSGGEPLLRQDLAELIEAGRGLGFYTNLITSGIGLDEARLARFAEAGLDHVQISFQAADEEVNNLLAGSRKAFAQKLAMARAVKAHGYPMVLNFVTHRHNIDNIERIIQLCIELEADYVELATCQFYGWAALNRAGLLPTRAQLERAERITAEYRQRLAAEGNPCKLIFVTPDYYEERPKACMGGWASVFLDITPDGTALPCHSARQLPVQFPNVREHSLRHIWYESFGFNRYRGDAWMPEPCRSCEEKERDHGGCRCQAFLLTGDADATDPVCAKSARHDLILAARRQAEEAPLGLDALTWRNQRASRLICKA</sequence>
<organism>
    <name type="scientific">Pseudomonas aeruginosa (strain LESB58)</name>
    <dbReference type="NCBI Taxonomy" id="557722"/>
    <lineage>
        <taxon>Bacteria</taxon>
        <taxon>Pseudomonadati</taxon>
        <taxon>Pseudomonadota</taxon>
        <taxon>Gammaproteobacteria</taxon>
        <taxon>Pseudomonadales</taxon>
        <taxon>Pseudomonadaceae</taxon>
        <taxon>Pseudomonas</taxon>
    </lineage>
</organism>
<feature type="chain" id="PRO_1000131281" description="PqqA peptide cyclase">
    <location>
        <begin position="1"/>
        <end position="381"/>
    </location>
</feature>
<feature type="domain" description="Radical SAM core" evidence="2">
    <location>
        <begin position="12"/>
        <end position="228"/>
    </location>
</feature>
<feature type="binding site" evidence="1">
    <location>
        <position position="26"/>
    </location>
    <ligand>
        <name>[4Fe-4S] cluster</name>
        <dbReference type="ChEBI" id="CHEBI:49883"/>
        <note>4Fe-4S-S-AdoMet</note>
    </ligand>
</feature>
<feature type="binding site" evidence="1">
    <location>
        <position position="30"/>
    </location>
    <ligand>
        <name>[4Fe-4S] cluster</name>
        <dbReference type="ChEBI" id="CHEBI:49883"/>
        <note>4Fe-4S-S-AdoMet</note>
    </ligand>
</feature>
<feature type="binding site" evidence="1">
    <location>
        <position position="33"/>
    </location>
    <ligand>
        <name>[4Fe-4S] cluster</name>
        <dbReference type="ChEBI" id="CHEBI:49883"/>
        <note>4Fe-4S-S-AdoMet</note>
    </ligand>
</feature>
<protein>
    <recommendedName>
        <fullName evidence="1">PqqA peptide cyclase</fullName>
        <ecNumber evidence="1">1.21.98.4</ecNumber>
    </recommendedName>
    <alternativeName>
        <fullName evidence="1">Coenzyme PQQ synthesis protein E</fullName>
    </alternativeName>
    <alternativeName>
        <fullName evidence="1">Pyrroloquinoline quinone biosynthesis protein E</fullName>
    </alternativeName>
</protein>
<gene>
    <name evidence="1" type="primary">pqqE</name>
    <name type="ordered locus">PLES_33341</name>
</gene>
<name>PQQE_PSEA8</name>
<evidence type="ECO:0000255" key="1">
    <source>
        <dbReference type="HAMAP-Rule" id="MF_00660"/>
    </source>
</evidence>
<evidence type="ECO:0000255" key="2">
    <source>
        <dbReference type="PROSITE-ProRule" id="PRU01266"/>
    </source>
</evidence>
<accession>B7VAB6</accession>
<comment type="function">
    <text evidence="1">Catalyzes the cross-linking of a glutamate residue and a tyrosine residue in the PqqA protein as part of the biosynthesis of pyrroloquinoline quinone (PQQ).</text>
</comment>
<comment type="catalytic activity">
    <reaction evidence="1">
        <text>[PQQ precursor protein] + S-adenosyl-L-methionine = E-Y cross-linked-[PQQ precursor protein] + 5'-deoxyadenosine + L-methionine + H(+)</text>
        <dbReference type="Rhea" id="RHEA:56836"/>
        <dbReference type="Rhea" id="RHEA-COMP:14800"/>
        <dbReference type="Rhea" id="RHEA-COMP:14801"/>
        <dbReference type="ChEBI" id="CHEBI:15378"/>
        <dbReference type="ChEBI" id="CHEBI:17319"/>
        <dbReference type="ChEBI" id="CHEBI:57844"/>
        <dbReference type="ChEBI" id="CHEBI:59789"/>
        <dbReference type="ChEBI" id="CHEBI:141026"/>
        <dbReference type="ChEBI" id="CHEBI:141027"/>
        <dbReference type="EC" id="1.21.98.4"/>
    </reaction>
</comment>
<comment type="cofactor">
    <cofactor evidence="1">
        <name>[4Fe-4S] cluster</name>
        <dbReference type="ChEBI" id="CHEBI:49883"/>
    </cofactor>
    <text evidence="1">Binds 1 [4Fe-4S] cluster. The cluster is coordinated with 3 cysteines and an exchangeable S-adenosyl-L-methionine.</text>
</comment>
<comment type="pathway">
    <text evidence="1">Cofactor biosynthesis; pyrroloquinoline quinone biosynthesis.</text>
</comment>
<comment type="subunit">
    <text evidence="1">Interacts with PqqD. The interaction is necessary for activity of PqqE.</text>
</comment>
<comment type="similarity">
    <text evidence="1">Belongs to the radical SAM superfamily. PqqE family.</text>
</comment>
<keyword id="KW-0004">4Fe-4S</keyword>
<keyword id="KW-0408">Iron</keyword>
<keyword id="KW-0411">Iron-sulfur</keyword>
<keyword id="KW-0479">Metal-binding</keyword>
<keyword id="KW-0560">Oxidoreductase</keyword>
<keyword id="KW-0884">PQQ biosynthesis</keyword>
<keyword id="KW-0949">S-adenosyl-L-methionine</keyword>
<reference key="1">
    <citation type="journal article" date="2009" name="Genome Res.">
        <title>Newly introduced genomic prophage islands are critical determinants of in vivo competitiveness in the Liverpool epidemic strain of Pseudomonas aeruginosa.</title>
        <authorList>
            <person name="Winstanley C."/>
            <person name="Langille M.G.I."/>
            <person name="Fothergill J.L."/>
            <person name="Kukavica-Ibrulj I."/>
            <person name="Paradis-Bleau C."/>
            <person name="Sanschagrin F."/>
            <person name="Thomson N.R."/>
            <person name="Winsor G.L."/>
            <person name="Quail M.A."/>
            <person name="Lennard N."/>
            <person name="Bignell A."/>
            <person name="Clarke L."/>
            <person name="Seeger K."/>
            <person name="Saunders D."/>
            <person name="Harris D."/>
            <person name="Parkhill J."/>
            <person name="Hancock R.E.W."/>
            <person name="Brinkman F.S.L."/>
            <person name="Levesque R.C."/>
        </authorList>
    </citation>
    <scope>NUCLEOTIDE SEQUENCE [LARGE SCALE GENOMIC DNA]</scope>
    <source>
        <strain>LESB58</strain>
    </source>
</reference>